<gene>
    <name evidence="1" type="primary">psbF</name>
</gene>
<accession>Q8HRZ6</accession>
<keyword id="KW-0150">Chloroplast</keyword>
<keyword id="KW-0249">Electron transport</keyword>
<keyword id="KW-0349">Heme</keyword>
<keyword id="KW-0408">Iron</keyword>
<keyword id="KW-0472">Membrane</keyword>
<keyword id="KW-0479">Metal-binding</keyword>
<keyword id="KW-0602">Photosynthesis</keyword>
<keyword id="KW-0604">Photosystem II</keyword>
<keyword id="KW-0934">Plastid</keyword>
<keyword id="KW-0793">Thylakoid</keyword>
<keyword id="KW-0812">Transmembrane</keyword>
<keyword id="KW-1133">Transmembrane helix</keyword>
<keyword id="KW-0813">Transport</keyword>
<protein>
    <recommendedName>
        <fullName evidence="1">Cytochrome b559 subunit beta</fullName>
    </recommendedName>
    <alternativeName>
        <fullName evidence="1">PSII reaction center subunit VI</fullName>
    </alternativeName>
</protein>
<name>PSBF_EPHSI</name>
<organism>
    <name type="scientific">Ephedra sinica</name>
    <name type="common">Chinese ephedra</name>
    <name type="synonym">Ma huang</name>
    <dbReference type="NCBI Taxonomy" id="33152"/>
    <lineage>
        <taxon>Eukaryota</taxon>
        <taxon>Viridiplantae</taxon>
        <taxon>Streptophyta</taxon>
        <taxon>Embryophyta</taxon>
        <taxon>Tracheophyta</taxon>
        <taxon>Spermatophyta</taxon>
        <taxon>Gnetopsida</taxon>
        <taxon>Gnetidae</taxon>
        <taxon>Ephedrales</taxon>
        <taxon>Ephedraceae</taxon>
        <taxon>Ephedra</taxon>
    </lineage>
</organism>
<comment type="function">
    <text evidence="1">This b-type cytochrome is tightly associated with the reaction center of photosystem II (PSII). PSII is a light-driven water:plastoquinone oxidoreductase that uses light energy to abstract electrons from H(2)O, generating O(2) and a proton gradient subsequently used for ATP formation. It consists of a core antenna complex that captures photons, and an electron transfer chain that converts photonic excitation into a charge separation.</text>
</comment>
<comment type="cofactor">
    <cofactor evidence="1">
        <name>heme b</name>
        <dbReference type="ChEBI" id="CHEBI:60344"/>
    </cofactor>
    <text evidence="1">With its partner (PsbE) binds heme. PSII binds additional chlorophylls, carotenoids and specific lipids.</text>
</comment>
<comment type="subunit">
    <text evidence="1">Heterodimer of an alpha subunit and a beta subunit. PSII is composed of 1 copy each of membrane proteins PsbA, PsbB, PsbC, PsbD, PsbE, PsbF, PsbH, PsbI, PsbJ, PsbK, PsbL, PsbM, PsbT, PsbX, PsbY, PsbZ, Psb30/Ycf12, at least 3 peripheral proteins of the oxygen-evolving complex and a large number of cofactors. It forms dimeric complexes.</text>
</comment>
<comment type="subcellular location">
    <subcellularLocation>
        <location evidence="1">Plastid</location>
        <location evidence="1">Chloroplast thylakoid membrane</location>
        <topology evidence="1">Single-pass membrane protein</topology>
    </subcellularLocation>
</comment>
<comment type="similarity">
    <text evidence="1">Belongs to the PsbE/PsbF family.</text>
</comment>
<sequence length="39" mass="4510">MTIDRIYPIFTVRWLAIHGLAVPTVFFLGSISAMQFIQR</sequence>
<reference key="1">
    <citation type="submission" date="2000-02" db="EMBL/GenBank/DDBJ databases">
        <title>Long branches in the seed plants and the root of the angiosperms.</title>
        <authorList>
            <person name="Graham S.W."/>
            <person name="Reeves P.A."/>
            <person name="Burns A."/>
            <person name="Olmstead R.G."/>
        </authorList>
    </citation>
    <scope>NUCLEOTIDE SEQUENCE [GENOMIC DNA]</scope>
</reference>
<proteinExistence type="inferred from homology"/>
<dbReference type="EMBL" id="AY007477">
    <property type="protein sequence ID" value="AAG26991.1"/>
    <property type="molecule type" value="Genomic_DNA"/>
</dbReference>
<dbReference type="RefSeq" id="YP_009694801.1">
    <property type="nucleotide sequence ID" value="NC_044773.1"/>
</dbReference>
<dbReference type="SMR" id="Q8HRZ6"/>
<dbReference type="GeneID" id="41825920"/>
<dbReference type="GO" id="GO:0009535">
    <property type="term" value="C:chloroplast thylakoid membrane"/>
    <property type="evidence" value="ECO:0007669"/>
    <property type="project" value="UniProtKB-SubCell"/>
</dbReference>
<dbReference type="GO" id="GO:0009539">
    <property type="term" value="C:photosystem II reaction center"/>
    <property type="evidence" value="ECO:0007669"/>
    <property type="project" value="InterPro"/>
</dbReference>
<dbReference type="GO" id="GO:0009055">
    <property type="term" value="F:electron transfer activity"/>
    <property type="evidence" value="ECO:0007669"/>
    <property type="project" value="UniProtKB-UniRule"/>
</dbReference>
<dbReference type="GO" id="GO:0020037">
    <property type="term" value="F:heme binding"/>
    <property type="evidence" value="ECO:0007669"/>
    <property type="project" value="InterPro"/>
</dbReference>
<dbReference type="GO" id="GO:0005506">
    <property type="term" value="F:iron ion binding"/>
    <property type="evidence" value="ECO:0007669"/>
    <property type="project" value="UniProtKB-UniRule"/>
</dbReference>
<dbReference type="GO" id="GO:0009767">
    <property type="term" value="P:photosynthetic electron transport chain"/>
    <property type="evidence" value="ECO:0007669"/>
    <property type="project" value="InterPro"/>
</dbReference>
<dbReference type="HAMAP" id="MF_00643">
    <property type="entry name" value="PSII_PsbF"/>
    <property type="match status" value="1"/>
</dbReference>
<dbReference type="InterPro" id="IPR006241">
    <property type="entry name" value="PSII_cyt_b559_bsu"/>
</dbReference>
<dbReference type="InterPro" id="IPR006216">
    <property type="entry name" value="PSII_cyt_b559_CS"/>
</dbReference>
<dbReference type="InterPro" id="IPR013081">
    <property type="entry name" value="PSII_cyt_b559_N"/>
</dbReference>
<dbReference type="NCBIfam" id="TIGR01333">
    <property type="entry name" value="cyt_b559_beta"/>
    <property type="match status" value="1"/>
</dbReference>
<dbReference type="Pfam" id="PF00283">
    <property type="entry name" value="Cytochrom_B559"/>
    <property type="match status" value="1"/>
</dbReference>
<dbReference type="PIRSF" id="PIRSF000037">
    <property type="entry name" value="PsbF"/>
    <property type="match status" value="1"/>
</dbReference>
<dbReference type="SUPFAM" id="SSF161045">
    <property type="entry name" value="Cytochrome b559 subunits"/>
    <property type="match status" value="1"/>
</dbReference>
<dbReference type="PROSITE" id="PS00537">
    <property type="entry name" value="CYTOCHROME_B559"/>
    <property type="match status" value="1"/>
</dbReference>
<geneLocation type="chloroplast"/>
<feature type="chain" id="PRO_0000200389" description="Cytochrome b559 subunit beta">
    <location>
        <begin position="1"/>
        <end position="39"/>
    </location>
</feature>
<feature type="transmembrane region" description="Helical" evidence="1">
    <location>
        <begin position="14"/>
        <end position="30"/>
    </location>
</feature>
<feature type="binding site" description="axial binding residue" evidence="1">
    <location>
        <position position="18"/>
    </location>
    <ligand>
        <name>heme</name>
        <dbReference type="ChEBI" id="CHEBI:30413"/>
        <note>ligand shared with alpha subunit</note>
    </ligand>
    <ligandPart>
        <name>Fe</name>
        <dbReference type="ChEBI" id="CHEBI:18248"/>
    </ligandPart>
</feature>
<evidence type="ECO:0000255" key="1">
    <source>
        <dbReference type="HAMAP-Rule" id="MF_00643"/>
    </source>
</evidence>